<accession>P30953</accession>
<accession>O43884</accession>
<accession>P47882</accession>
<accession>P47885</accession>
<accession>Q6IFA9</accession>
<accession>Q6IFM5</accession>
<accession>Q9UBJ1</accession>
<accession>Q9UM60</accession>
<dbReference type="EMBL" id="X64994">
    <property type="protein sequence ID" value="CAA46127.1"/>
    <property type="molecule type" value="Genomic_DNA"/>
</dbReference>
<dbReference type="EMBL" id="AF087916">
    <property type="protein sequence ID" value="AAF37309.1"/>
    <property type="molecule type" value="Genomic_DNA"/>
</dbReference>
<dbReference type="EMBL" id="AF095725">
    <property type="protein sequence ID" value="AAF03261.1"/>
    <property type="molecule type" value="Genomic_DNA"/>
</dbReference>
<dbReference type="EMBL" id="U78308">
    <property type="protein sequence ID" value="AAD00276.1"/>
    <property type="molecule type" value="Genomic_DNA"/>
</dbReference>
<dbReference type="EMBL" id="AF052041">
    <property type="protein sequence ID" value="AAD17495.1"/>
    <property type="molecule type" value="Genomic_DNA"/>
</dbReference>
<dbReference type="EMBL" id="U04642">
    <property type="protein sequence ID" value="AAA17447.1"/>
    <property type="molecule type" value="Genomic_DNA"/>
</dbReference>
<dbReference type="EMBL" id="U04682">
    <property type="protein sequence ID" value="AAA18346.1"/>
    <property type="molecule type" value="Genomic_DNA"/>
</dbReference>
<dbReference type="EMBL" id="AF399550">
    <property type="protein sequence ID" value="AAK95035.1"/>
    <property type="molecule type" value="Genomic_DNA"/>
</dbReference>
<dbReference type="EMBL" id="U86222">
    <property type="protein sequence ID" value="AAC39613.1"/>
    <property type="molecule type" value="Genomic_DNA"/>
</dbReference>
<dbReference type="EMBL" id="U86274">
    <property type="protein sequence ID" value="AAC39629.1"/>
    <property type="molecule type" value="Genomic_DNA"/>
</dbReference>
<dbReference type="EMBL" id="BK004237">
    <property type="protein sequence ID" value="DAA04635.1"/>
    <property type="molecule type" value="Genomic_DNA"/>
</dbReference>
<dbReference type="EMBL" id="BK004353">
    <property type="protein sequence ID" value="DAA04751.1"/>
    <property type="molecule type" value="Genomic_DNA"/>
</dbReference>
<dbReference type="CCDS" id="CCDS11024.1"/>
<dbReference type="PIR" id="I38470">
    <property type="entry name" value="I38470"/>
</dbReference>
<dbReference type="PIR" id="I38474">
    <property type="entry name" value="I38474"/>
</dbReference>
<dbReference type="PIR" id="S20572">
    <property type="entry name" value="S20572"/>
</dbReference>
<dbReference type="RefSeq" id="NP_003544.2">
    <property type="nucleotide sequence ID" value="NM_003553.3"/>
</dbReference>
<dbReference type="SMR" id="P30953"/>
<dbReference type="BioGRID" id="113977">
    <property type="interactions" value="5"/>
</dbReference>
<dbReference type="FunCoup" id="P30953">
    <property type="interactions" value="465"/>
</dbReference>
<dbReference type="IntAct" id="P30953">
    <property type="interactions" value="3"/>
</dbReference>
<dbReference type="STRING" id="9606.ENSP00000313384"/>
<dbReference type="TCDB" id="9.A.14.8.1">
    <property type="family name" value="the g-protein-coupled receptor (gpcr) family"/>
</dbReference>
<dbReference type="GlyCosmos" id="P30953">
    <property type="glycosylation" value="1 site, No reported glycans"/>
</dbReference>
<dbReference type="GlyGen" id="P30953">
    <property type="glycosylation" value="1 site"/>
</dbReference>
<dbReference type="iPTMnet" id="P30953"/>
<dbReference type="PhosphoSitePlus" id="P30953"/>
<dbReference type="BioMuta" id="OR1E1"/>
<dbReference type="DMDM" id="400671"/>
<dbReference type="MassIVE" id="P30953"/>
<dbReference type="PaxDb" id="9606-ENSP00000313384"/>
<dbReference type="Antibodypedia" id="23007">
    <property type="antibodies" value="15 antibodies from 10 providers"/>
</dbReference>
<dbReference type="DNASU" id="8387"/>
<dbReference type="Ensembl" id="ENST00000322608.2">
    <property type="protein sequence ID" value="ENSP00000313384.2"/>
    <property type="gene ID" value="ENSG00000180016.2"/>
</dbReference>
<dbReference type="GeneID" id="8387"/>
<dbReference type="KEGG" id="hsa:8387"/>
<dbReference type="MANE-Select" id="ENST00000322608.2">
    <property type="protein sequence ID" value="ENSP00000313384.2"/>
    <property type="RefSeq nucleotide sequence ID" value="NM_003553.3"/>
    <property type="RefSeq protein sequence ID" value="NP_003544.2"/>
</dbReference>
<dbReference type="UCSC" id="uc002fvj.2">
    <property type="organism name" value="human"/>
</dbReference>
<dbReference type="AGR" id="HGNC:8189"/>
<dbReference type="CTD" id="8387"/>
<dbReference type="DisGeNET" id="8387"/>
<dbReference type="GeneCards" id="OR1E1"/>
<dbReference type="HGNC" id="HGNC:8189">
    <property type="gene designation" value="OR1E1"/>
</dbReference>
<dbReference type="HPA" id="ENSG00000180016">
    <property type="expression patterns" value="Not detected"/>
</dbReference>
<dbReference type="neXtProt" id="NX_P30953"/>
<dbReference type="PharmGKB" id="PA32062"/>
<dbReference type="VEuPathDB" id="HostDB:ENSG00000180016"/>
<dbReference type="eggNOG" id="ENOG502SI5J">
    <property type="taxonomic scope" value="Eukaryota"/>
</dbReference>
<dbReference type="GeneTree" id="ENSGT00940000165283"/>
<dbReference type="HOGENOM" id="CLU_012526_1_0_1"/>
<dbReference type="InParanoid" id="P30953"/>
<dbReference type="OMA" id="TVMSTMY"/>
<dbReference type="OrthoDB" id="9975554at2759"/>
<dbReference type="PAN-GO" id="P30953">
    <property type="GO annotations" value="3 GO annotations based on evolutionary models"/>
</dbReference>
<dbReference type="PhylomeDB" id="P30953"/>
<dbReference type="TreeFam" id="TF337210"/>
<dbReference type="PathwayCommons" id="P30953"/>
<dbReference type="Reactome" id="R-HSA-381753">
    <property type="pathway name" value="Olfactory Signaling Pathway"/>
</dbReference>
<dbReference type="Reactome" id="R-HSA-9752946">
    <property type="pathway name" value="Expression and translocation of olfactory receptors"/>
</dbReference>
<dbReference type="BioGRID-ORCS" id="8387">
    <property type="hits" value="10 hits in 712 CRISPR screens"/>
</dbReference>
<dbReference type="GeneWiki" id="OR1E1"/>
<dbReference type="GenomeRNAi" id="8387"/>
<dbReference type="Pharos" id="P30953">
    <property type="development level" value="Tdark"/>
</dbReference>
<dbReference type="PRO" id="PR:P30953"/>
<dbReference type="Proteomes" id="UP000005640">
    <property type="component" value="Chromosome 17"/>
</dbReference>
<dbReference type="RNAct" id="P30953">
    <property type="molecule type" value="protein"/>
</dbReference>
<dbReference type="Bgee" id="ENSG00000180016">
    <property type="expression patterns" value="Expressed in hindlimb stylopod muscle and 24 other cell types or tissues"/>
</dbReference>
<dbReference type="GO" id="GO:0005886">
    <property type="term" value="C:plasma membrane"/>
    <property type="evidence" value="ECO:0000318"/>
    <property type="project" value="GO_Central"/>
</dbReference>
<dbReference type="GO" id="GO:0004930">
    <property type="term" value="F:G protein-coupled receptor activity"/>
    <property type="evidence" value="ECO:0007669"/>
    <property type="project" value="UniProtKB-KW"/>
</dbReference>
<dbReference type="GO" id="GO:0004984">
    <property type="term" value="F:olfactory receptor activity"/>
    <property type="evidence" value="ECO:0000318"/>
    <property type="project" value="GO_Central"/>
</dbReference>
<dbReference type="GO" id="GO:0007608">
    <property type="term" value="P:sensory perception of smell"/>
    <property type="evidence" value="ECO:0000303"/>
    <property type="project" value="UniProtKB"/>
</dbReference>
<dbReference type="GO" id="GO:0007165">
    <property type="term" value="P:signal transduction"/>
    <property type="evidence" value="ECO:0000318"/>
    <property type="project" value="GO_Central"/>
</dbReference>
<dbReference type="CDD" id="cd15236">
    <property type="entry name" value="7tmA_OR1E-like"/>
    <property type="match status" value="1"/>
</dbReference>
<dbReference type="FunFam" id="1.10.1220.70:FF:000001">
    <property type="entry name" value="Olfactory receptor"/>
    <property type="match status" value="1"/>
</dbReference>
<dbReference type="FunFam" id="1.20.1070.10:FF:000009">
    <property type="entry name" value="Olfactory receptor"/>
    <property type="match status" value="1"/>
</dbReference>
<dbReference type="Gene3D" id="1.20.1070.10">
    <property type="entry name" value="Rhodopsin 7-helix transmembrane proteins"/>
    <property type="match status" value="1"/>
</dbReference>
<dbReference type="InterPro" id="IPR000276">
    <property type="entry name" value="GPCR_Rhodpsn"/>
</dbReference>
<dbReference type="InterPro" id="IPR017452">
    <property type="entry name" value="GPCR_Rhodpsn_7TM"/>
</dbReference>
<dbReference type="InterPro" id="IPR000725">
    <property type="entry name" value="Olfact_rcpt"/>
</dbReference>
<dbReference type="PANTHER" id="PTHR48001">
    <property type="entry name" value="OLFACTORY RECEPTOR"/>
    <property type="match status" value="1"/>
</dbReference>
<dbReference type="Pfam" id="PF13853">
    <property type="entry name" value="7tm_4"/>
    <property type="match status" value="1"/>
</dbReference>
<dbReference type="PRINTS" id="PR00237">
    <property type="entry name" value="GPCRRHODOPSN"/>
</dbReference>
<dbReference type="PRINTS" id="PR00245">
    <property type="entry name" value="OLFACTORYR"/>
</dbReference>
<dbReference type="SUPFAM" id="SSF81321">
    <property type="entry name" value="Family A G protein-coupled receptor-like"/>
    <property type="match status" value="1"/>
</dbReference>
<dbReference type="PROSITE" id="PS00237">
    <property type="entry name" value="G_PROTEIN_RECEP_F1_1"/>
    <property type="match status" value="1"/>
</dbReference>
<dbReference type="PROSITE" id="PS50262">
    <property type="entry name" value="G_PROTEIN_RECEP_F1_2"/>
    <property type="match status" value="1"/>
</dbReference>
<protein>
    <recommendedName>
        <fullName>Olfactory receptor 1E1</fullName>
    </recommendedName>
    <alternativeName>
        <fullName>Olfactory receptor 13-66</fullName>
        <shortName>OR13-66</shortName>
    </alternativeName>
    <alternativeName>
        <fullName>Olfactory receptor 17-2/17-32</fullName>
        <shortName>OR17-2</shortName>
        <shortName>OR17-32</shortName>
    </alternativeName>
    <alternativeName>
        <fullName>Olfactory receptor 1E5</fullName>
    </alternativeName>
    <alternativeName>
        <fullName>Olfactory receptor 1E6</fullName>
    </alternativeName>
    <alternativeName>
        <fullName>Olfactory receptor 5-85</fullName>
        <shortName>OR5-85</shortName>
    </alternativeName>
    <alternativeName>
        <fullName>Olfactory receptor OR17-18</fullName>
    </alternativeName>
    <alternativeName>
        <fullName>Olfactory receptor-like protein HGMP07I</fullName>
    </alternativeName>
</protein>
<reference key="1">
    <citation type="journal article" date="1992" name="Nature">
        <title>Expression of members of the putative olfactory receptor gene family in mammalian germ cells.</title>
        <authorList>
            <person name="Parmentier M."/>
            <person name="Libert F."/>
            <person name="Schurmans S."/>
            <person name="Schiffmann S."/>
            <person name="Lefort A."/>
            <person name="Eggerickx D."/>
            <person name="Ledent C."/>
            <person name="Mollereau C."/>
            <person name="Gerard C."/>
            <person name="Perret J."/>
            <person name="Grootegoed A."/>
            <person name="Vassart G."/>
        </authorList>
    </citation>
    <scope>NUCLEOTIDE SEQUENCE [GENOMIC DNA]</scope>
    <source>
        <tissue>Testis</tissue>
    </source>
</reference>
<reference key="2">
    <citation type="journal article" date="2000" name="Genomics">
        <title>Sequence, structure, and evolution of a complete human olfactory receptor gene cluster.</title>
        <authorList>
            <person name="Glusman G."/>
            <person name="Sosinsky A."/>
            <person name="Ben-Asher E."/>
            <person name="Avidan N."/>
            <person name="Sonkin D."/>
            <person name="Bahar A."/>
            <person name="Rosenthal A."/>
            <person name="Clifton S."/>
            <person name="Roe B."/>
            <person name="Ferraz C."/>
            <person name="Demaille J.G."/>
            <person name="Lancet D."/>
        </authorList>
    </citation>
    <scope>NUCLEOTIDE SEQUENCE [GENOMIC DNA]</scope>
</reference>
<reference key="3">
    <citation type="submission" date="1998-09" db="EMBL/GenBank/DDBJ databases">
        <title>DNA sequence of PAC clone PAC_clone_LLNLP704E02527Q3 from the olfactory receptor gene cluster of human chromosome 17p13.3, containing OR genes 2, 201, 93 and pseudogene 1.</title>
        <authorList>
            <person name="Ferraz C."/>
            <person name="Vidal S."/>
            <person name="Brun C."/>
            <person name="Demaille J.G."/>
        </authorList>
    </citation>
    <scope>NUCLEOTIDE SEQUENCE [GENOMIC DNA]</scope>
</reference>
<reference key="4">
    <citation type="submission" date="1996-11" db="EMBL/GenBank/DDBJ databases">
        <title>Sequence of cosmid ICRF105cE06173 of human chromosome 17p13.3 olfactory receptor gene cluster, containing genes OR17-32 and OR17-201-1, and pseudogene OR17-01.</title>
        <authorList>
            <person name="Ferraz C."/>
            <person name="Demaille J.G."/>
        </authorList>
    </citation>
    <scope>NUCLEOTIDE SEQUENCE [GENOMIC DNA]</scope>
</reference>
<reference key="5">
    <citation type="submission" date="1998-03" db="EMBL/GenBank/DDBJ databases">
        <title>Sequence of cosmid L53 of human chromosome 17p13.3 olfactory receptor gene cluster, containing the OR17-32 gene and the OR17-01 pseudogene.</title>
        <authorList>
            <person name="Ferraz C."/>
            <person name="Vidal S."/>
            <person name="Brun C."/>
            <person name="Demaille J.G."/>
        </authorList>
    </citation>
    <scope>NUCLEOTIDE SEQUENCE [GENOMIC DNA]</scope>
</reference>
<reference key="6">
    <citation type="journal article" date="1994" name="Hum. Mol. Genet.">
        <title>Olfactory receptor gene cluster on human chromosome 17: possible duplication of an ancestral receptor repertoire.</title>
        <authorList>
            <person name="Ben-Arie N."/>
            <person name="Lancet D."/>
            <person name="Taylor C."/>
            <person name="Khen M."/>
            <person name="Walker N."/>
            <person name="Ledbetter D.H."/>
            <person name="Carrozzo R."/>
            <person name="Patel K."/>
            <person name="Sheer D."/>
            <person name="Lehrach H."/>
            <person name="North M.A."/>
        </authorList>
    </citation>
    <scope>NUCLEOTIDE SEQUENCE [GENOMIC DNA] OF 68-283</scope>
</reference>
<reference key="7">
    <citation type="journal article" date="2002" name="Genomics">
        <title>DEFOG: a practical scheme for deciphering families of genes.</title>
        <authorList>
            <person name="Fuchs T."/>
            <person name="Malecova B."/>
            <person name="Linhart C."/>
            <person name="Sharan R."/>
            <person name="Khen M."/>
            <person name="Herwig R."/>
            <person name="Shmulevich D."/>
            <person name="Elkon R."/>
            <person name="Steinfath M."/>
            <person name="O'Brien J.K."/>
            <person name="Radelof U."/>
            <person name="Lehrach H."/>
            <person name="Lancet D."/>
            <person name="Shamir R."/>
        </authorList>
    </citation>
    <scope>NUCLEOTIDE SEQUENCE [GENOMIC DNA] OF 68-283</scope>
</reference>
<reference key="8">
    <citation type="journal article" date="1998" name="Nat. Genet.">
        <title>Distribution of olfactory receptor genes in the human genome.</title>
        <authorList>
            <person name="Rouquier S."/>
            <person name="Taviaux S."/>
            <person name="Trask B.J."/>
            <person name="Brand-Arpon V."/>
            <person name="Van den Engh G."/>
            <person name="Demaille J.G."/>
            <person name="Giorgi D."/>
        </authorList>
    </citation>
    <scope>NUCLEOTIDE SEQUENCE [GENOMIC DNA] OF 68-283</scope>
</reference>
<reference key="9">
    <citation type="journal article" date="2004" name="Proc. Natl. Acad. Sci. U.S.A.">
        <title>The human olfactory receptor gene family.</title>
        <authorList>
            <person name="Malnic B."/>
            <person name="Godfrey P.A."/>
            <person name="Buck L.B."/>
        </authorList>
    </citation>
    <scope>IDENTIFICATION</scope>
    <scope>VARIANT THR-143</scope>
</reference>
<reference key="10">
    <citation type="journal article" date="2004" name="Proc. Natl. Acad. Sci. U.S.A.">
        <authorList>
            <person name="Malnic B."/>
            <person name="Godfrey P.A."/>
            <person name="Buck L.B."/>
        </authorList>
    </citation>
    <scope>ERRATUM OF PUBMED:14983052</scope>
</reference>
<proteinExistence type="inferred from homology"/>
<organism>
    <name type="scientific">Homo sapiens</name>
    <name type="common">Human</name>
    <dbReference type="NCBI Taxonomy" id="9606"/>
    <lineage>
        <taxon>Eukaryota</taxon>
        <taxon>Metazoa</taxon>
        <taxon>Chordata</taxon>
        <taxon>Craniata</taxon>
        <taxon>Vertebrata</taxon>
        <taxon>Euteleostomi</taxon>
        <taxon>Mammalia</taxon>
        <taxon>Eutheria</taxon>
        <taxon>Euarchontoglires</taxon>
        <taxon>Primates</taxon>
        <taxon>Haplorrhini</taxon>
        <taxon>Catarrhini</taxon>
        <taxon>Hominidae</taxon>
        <taxon>Homo</taxon>
    </lineage>
</organism>
<evidence type="ECO:0000255" key="1"/>
<evidence type="ECO:0000255" key="2">
    <source>
        <dbReference type="PROSITE-ProRule" id="PRU00521"/>
    </source>
</evidence>
<evidence type="ECO:0000269" key="3">
    <source>
    </source>
</evidence>
<evidence type="ECO:0000305" key="4"/>
<feature type="chain" id="PRO_0000150425" description="Olfactory receptor 1E1">
    <location>
        <begin position="1"/>
        <end position="314"/>
    </location>
</feature>
<feature type="topological domain" description="Extracellular" evidence="1">
    <location>
        <begin position="1"/>
        <end position="25"/>
    </location>
</feature>
<feature type="transmembrane region" description="Helical; Name=1" evidence="1">
    <location>
        <begin position="26"/>
        <end position="49"/>
    </location>
</feature>
<feature type="topological domain" description="Cytoplasmic" evidence="1">
    <location>
        <begin position="50"/>
        <end position="57"/>
    </location>
</feature>
<feature type="transmembrane region" description="Helical; Name=2" evidence="1">
    <location>
        <begin position="58"/>
        <end position="79"/>
    </location>
</feature>
<feature type="topological domain" description="Extracellular" evidence="1">
    <location>
        <begin position="80"/>
        <end position="100"/>
    </location>
</feature>
<feature type="transmembrane region" description="Helical; Name=3" evidence="1">
    <location>
        <begin position="101"/>
        <end position="120"/>
    </location>
</feature>
<feature type="topological domain" description="Cytoplasmic" evidence="1">
    <location>
        <begin position="121"/>
        <end position="139"/>
    </location>
</feature>
<feature type="transmembrane region" description="Helical; Name=4" evidence="1">
    <location>
        <begin position="140"/>
        <end position="158"/>
    </location>
</feature>
<feature type="topological domain" description="Extracellular" evidence="1">
    <location>
        <begin position="159"/>
        <end position="195"/>
    </location>
</feature>
<feature type="transmembrane region" description="Helical; Name=5" evidence="1">
    <location>
        <begin position="196"/>
        <end position="219"/>
    </location>
</feature>
<feature type="topological domain" description="Cytoplasmic" evidence="1">
    <location>
        <begin position="220"/>
        <end position="236"/>
    </location>
</feature>
<feature type="transmembrane region" description="Helical; Name=6" evidence="1">
    <location>
        <begin position="237"/>
        <end position="259"/>
    </location>
</feature>
<feature type="topological domain" description="Extracellular" evidence="1">
    <location>
        <begin position="260"/>
        <end position="272"/>
    </location>
</feature>
<feature type="transmembrane region" description="Helical; Name=7" evidence="1">
    <location>
        <begin position="273"/>
        <end position="292"/>
    </location>
</feature>
<feature type="topological domain" description="Cytoplasmic" evidence="1">
    <location>
        <begin position="293"/>
        <end position="314"/>
    </location>
</feature>
<feature type="glycosylation site" description="N-linked (GlcNAc...) asparagine" evidence="1">
    <location>
        <position position="5"/>
    </location>
</feature>
<feature type="sequence variant" id="VAR_053119" description="In dbSNP:rs1735011.">
    <original>P</original>
    <variation>L</variation>
    <location>
        <position position="129"/>
    </location>
</feature>
<feature type="sequence variant" id="VAR_010226" description="In dbSNP:rs150989." evidence="3">
    <original>A</original>
    <variation>T</variation>
    <location>
        <position position="143"/>
    </location>
</feature>
<feature type="sequence variant" id="VAR_053120" description="In dbSNP:rs379856.">
    <original>S</original>
    <variation>P</variation>
    <location>
        <position position="262"/>
    </location>
</feature>
<feature type="sequence conflict" description="In Ref. 6; AAA17447." evidence="4" ref="6">
    <original>F</original>
    <variation>L</variation>
    <location>
        <position position="178"/>
    </location>
</feature>
<feature type="sequence conflict" description="In Ref. 8; AAC39629." evidence="4" ref="8">
    <original>I</original>
    <variation>V</variation>
    <location>
        <position position="221"/>
    </location>
</feature>
<sequence>MMGQNQTSISDFLLLGLPIQPEQQNLCYALFLAMYLTTLLGNLLIIVLIRLDSHLHTPMYLFLSNLSFSDLCFSSVTIPKLLQNMQNQDPSIPYADCLTQMYFFLLFGDLESFLLVAMAYDRYVAICFPLHYTAIMSPMLCLALVALSWVLTTFHAMLHTLLMARLCFCADNVIPHFFCDMSALLKLAFSDTRVNEWVIFIMGGLILVIPFLLILGSYARIVSSILKVPSSKGICKAFSTCGSHLSVVSLFYGTVIGLYLCSSANSSTLKDTVMAMMYTVVTPMLNPFIYSLRNRDMKGALSRVIHQKKTFFSL</sequence>
<name>OR1E1_HUMAN</name>
<comment type="function">
    <text evidence="4">Odorant receptor.</text>
</comment>
<comment type="subcellular location">
    <subcellularLocation>
        <location>Cell membrane</location>
        <topology>Multi-pass membrane protein</topology>
    </subcellularLocation>
</comment>
<comment type="similarity">
    <text evidence="2">Belongs to the G-protein coupled receptor 1 family.</text>
</comment>
<comment type="online information" name="Human Olfactory Receptor Data Exploratorium (HORDE)">
    <link uri="http://genome.weizmann.ac.il/horde/card/index/symbol:OR1E1"/>
</comment>
<keyword id="KW-1003">Cell membrane</keyword>
<keyword id="KW-0297">G-protein coupled receptor</keyword>
<keyword id="KW-0325">Glycoprotein</keyword>
<keyword id="KW-0472">Membrane</keyword>
<keyword id="KW-0552">Olfaction</keyword>
<keyword id="KW-0675">Receptor</keyword>
<keyword id="KW-1185">Reference proteome</keyword>
<keyword id="KW-0716">Sensory transduction</keyword>
<keyword id="KW-0807">Transducer</keyword>
<keyword id="KW-0812">Transmembrane</keyword>
<keyword id="KW-1133">Transmembrane helix</keyword>
<gene>
    <name type="primary">OR1E1</name>
    <name type="synonym">OR1E5</name>
    <name type="synonym">OR1E6</name>
    <name type="synonym">OR1E9P</name>
</gene>